<evidence type="ECO:0000250" key="1">
    <source>
        <dbReference type="UniProtKB" id="O94874"/>
    </source>
</evidence>
<evidence type="ECO:0000256" key="2">
    <source>
        <dbReference type="SAM" id="MobiDB-lite"/>
    </source>
</evidence>
<evidence type="ECO:0000305" key="3"/>
<evidence type="ECO:0007744" key="4">
    <source>
    </source>
</evidence>
<name>UFL1_ARATH</name>
<protein>
    <recommendedName>
        <fullName>E3 UFM1-protein ligase 1 homolog</fullName>
        <ecNumber>2.3.2.-</ecNumber>
    </recommendedName>
    <alternativeName>
        <fullName evidence="3">E3 UFM1-protein transferase 1 homolog</fullName>
    </alternativeName>
</protein>
<proteinExistence type="evidence at protein level"/>
<reference key="1">
    <citation type="journal article" date="2000" name="Nature">
        <title>Sequence and analysis of chromosome 3 of the plant Arabidopsis thaliana.</title>
        <authorList>
            <person name="Salanoubat M."/>
            <person name="Lemcke K."/>
            <person name="Rieger M."/>
            <person name="Ansorge W."/>
            <person name="Unseld M."/>
            <person name="Fartmann B."/>
            <person name="Valle G."/>
            <person name="Bloecker H."/>
            <person name="Perez-Alonso M."/>
            <person name="Obermaier B."/>
            <person name="Delseny M."/>
            <person name="Boutry M."/>
            <person name="Grivell L.A."/>
            <person name="Mache R."/>
            <person name="Puigdomenech P."/>
            <person name="De Simone V."/>
            <person name="Choisne N."/>
            <person name="Artiguenave F."/>
            <person name="Robert C."/>
            <person name="Brottier P."/>
            <person name="Wincker P."/>
            <person name="Cattolico L."/>
            <person name="Weissenbach J."/>
            <person name="Saurin W."/>
            <person name="Quetier F."/>
            <person name="Schaefer M."/>
            <person name="Mueller-Auer S."/>
            <person name="Gabel C."/>
            <person name="Fuchs M."/>
            <person name="Benes V."/>
            <person name="Wurmbach E."/>
            <person name="Drzonek H."/>
            <person name="Erfle H."/>
            <person name="Jordan N."/>
            <person name="Bangert S."/>
            <person name="Wiedelmann R."/>
            <person name="Kranz H."/>
            <person name="Voss H."/>
            <person name="Holland R."/>
            <person name="Brandt P."/>
            <person name="Nyakatura G."/>
            <person name="Vezzi A."/>
            <person name="D'Angelo M."/>
            <person name="Pallavicini A."/>
            <person name="Toppo S."/>
            <person name="Simionati B."/>
            <person name="Conrad A."/>
            <person name="Hornischer K."/>
            <person name="Kauer G."/>
            <person name="Loehnert T.-H."/>
            <person name="Nordsiek G."/>
            <person name="Reichelt J."/>
            <person name="Scharfe M."/>
            <person name="Schoen O."/>
            <person name="Bargues M."/>
            <person name="Terol J."/>
            <person name="Climent J."/>
            <person name="Navarro P."/>
            <person name="Collado C."/>
            <person name="Perez-Perez A."/>
            <person name="Ottenwaelder B."/>
            <person name="Duchemin D."/>
            <person name="Cooke R."/>
            <person name="Laudie M."/>
            <person name="Berger-Llauro C."/>
            <person name="Purnelle B."/>
            <person name="Masuy D."/>
            <person name="de Haan M."/>
            <person name="Maarse A.C."/>
            <person name="Alcaraz J.-P."/>
            <person name="Cottet A."/>
            <person name="Casacuberta E."/>
            <person name="Monfort A."/>
            <person name="Argiriou A."/>
            <person name="Flores M."/>
            <person name="Liguori R."/>
            <person name="Vitale D."/>
            <person name="Mannhaupt G."/>
            <person name="Haase D."/>
            <person name="Schoof H."/>
            <person name="Rudd S."/>
            <person name="Zaccaria P."/>
            <person name="Mewes H.-W."/>
            <person name="Mayer K.F.X."/>
            <person name="Kaul S."/>
            <person name="Town C.D."/>
            <person name="Koo H.L."/>
            <person name="Tallon L.J."/>
            <person name="Jenkins J."/>
            <person name="Rooney T."/>
            <person name="Rizzo M."/>
            <person name="Walts A."/>
            <person name="Utterback T."/>
            <person name="Fujii C.Y."/>
            <person name="Shea T.P."/>
            <person name="Creasy T.H."/>
            <person name="Haas B."/>
            <person name="Maiti R."/>
            <person name="Wu D."/>
            <person name="Peterson J."/>
            <person name="Van Aken S."/>
            <person name="Pai G."/>
            <person name="Militscher J."/>
            <person name="Sellers P."/>
            <person name="Gill J.E."/>
            <person name="Feldblyum T.V."/>
            <person name="Preuss D."/>
            <person name="Lin X."/>
            <person name="Nierman W.C."/>
            <person name="Salzberg S.L."/>
            <person name="White O."/>
            <person name="Venter J.C."/>
            <person name="Fraser C.M."/>
            <person name="Kaneko T."/>
            <person name="Nakamura Y."/>
            <person name="Sato S."/>
            <person name="Kato T."/>
            <person name="Asamizu E."/>
            <person name="Sasamoto S."/>
            <person name="Kimura T."/>
            <person name="Idesawa K."/>
            <person name="Kawashima K."/>
            <person name="Kishida Y."/>
            <person name="Kiyokawa C."/>
            <person name="Kohara M."/>
            <person name="Matsumoto M."/>
            <person name="Matsuno A."/>
            <person name="Muraki A."/>
            <person name="Nakayama S."/>
            <person name="Nakazaki N."/>
            <person name="Shinpo S."/>
            <person name="Takeuchi C."/>
            <person name="Wada T."/>
            <person name="Watanabe A."/>
            <person name="Yamada M."/>
            <person name="Yasuda M."/>
            <person name="Tabata S."/>
        </authorList>
    </citation>
    <scope>NUCLEOTIDE SEQUENCE [LARGE SCALE GENOMIC DNA]</scope>
    <source>
        <strain>cv. Columbia</strain>
    </source>
</reference>
<reference key="2">
    <citation type="journal article" date="2017" name="Plant J.">
        <title>Araport11: a complete reannotation of the Arabidopsis thaliana reference genome.</title>
        <authorList>
            <person name="Cheng C.Y."/>
            <person name="Krishnakumar V."/>
            <person name="Chan A.P."/>
            <person name="Thibaud-Nissen F."/>
            <person name="Schobel S."/>
            <person name="Town C.D."/>
        </authorList>
    </citation>
    <scope>GENOME REANNOTATION</scope>
    <source>
        <strain>cv. Columbia</strain>
    </source>
</reference>
<reference key="3">
    <citation type="journal article" date="2012" name="Mol. Cell. Proteomics">
        <title>Comparative large-scale characterisation of plant vs. mammal proteins reveals similar and idiosyncratic N-alpha acetylation features.</title>
        <authorList>
            <person name="Bienvenut W.V."/>
            <person name="Sumpton D."/>
            <person name="Martinez A."/>
            <person name="Lilla S."/>
            <person name="Espagne C."/>
            <person name="Meinnel T."/>
            <person name="Giglione C."/>
        </authorList>
    </citation>
    <scope>ACETYLATION [LARGE SCALE ANALYSIS] AT MET-1</scope>
    <scope>IDENTIFICATION BY MASS SPECTROMETRY [LARGE SCALE ANALYSIS]</scope>
</reference>
<dbReference type="EC" id="2.3.2.-"/>
<dbReference type="EMBL" id="AL355775">
    <property type="protein sequence ID" value="CAB90949.1"/>
    <property type="molecule type" value="Genomic_DNA"/>
</dbReference>
<dbReference type="EMBL" id="CP002686">
    <property type="protein sequence ID" value="AEE78135.1"/>
    <property type="molecule type" value="Genomic_DNA"/>
</dbReference>
<dbReference type="PIR" id="T49263">
    <property type="entry name" value="T49263"/>
</dbReference>
<dbReference type="RefSeq" id="NP_566883.4">
    <molecule id="Q9LX73-1"/>
    <property type="nucleotide sequence ID" value="NM_114491.7"/>
</dbReference>
<dbReference type="SMR" id="Q9LX73"/>
<dbReference type="FunCoup" id="Q9LX73">
    <property type="interactions" value="4746"/>
</dbReference>
<dbReference type="STRING" id="3702.Q9LX73"/>
<dbReference type="iPTMnet" id="Q9LX73"/>
<dbReference type="PaxDb" id="3702-AT3G46220.2"/>
<dbReference type="ProteomicsDB" id="245292">
    <molecule id="Q9LX73-1"/>
</dbReference>
<dbReference type="EnsemblPlants" id="AT3G46220.1">
    <molecule id="Q9LX73-1"/>
    <property type="protein sequence ID" value="AT3G46220.1"/>
    <property type="gene ID" value="AT3G46220"/>
</dbReference>
<dbReference type="GeneID" id="823767"/>
<dbReference type="Gramene" id="AT3G46220.1">
    <molecule id="Q9LX73-1"/>
    <property type="protein sequence ID" value="AT3G46220.1"/>
    <property type="gene ID" value="AT3G46220"/>
</dbReference>
<dbReference type="KEGG" id="ath:AT3G46220"/>
<dbReference type="Araport" id="AT3G46220"/>
<dbReference type="TAIR" id="AT3G46220"/>
<dbReference type="eggNOG" id="KOG2235">
    <property type="taxonomic scope" value="Eukaryota"/>
</dbReference>
<dbReference type="InParanoid" id="Q9LX73"/>
<dbReference type="PhylomeDB" id="Q9LX73"/>
<dbReference type="PRO" id="PR:Q9LX73"/>
<dbReference type="Proteomes" id="UP000006548">
    <property type="component" value="Chromosome 3"/>
</dbReference>
<dbReference type="ExpressionAtlas" id="Q9LX73">
    <property type="expression patterns" value="baseline and differential"/>
</dbReference>
<dbReference type="GO" id="GO:0061666">
    <property type="term" value="F:UFM1 ligase activity"/>
    <property type="evidence" value="ECO:0007669"/>
    <property type="project" value="InterPro"/>
</dbReference>
<dbReference type="GO" id="GO:0071569">
    <property type="term" value="P:protein ufmylation"/>
    <property type="evidence" value="ECO:0007669"/>
    <property type="project" value="InterPro"/>
</dbReference>
<dbReference type="InterPro" id="IPR018611">
    <property type="entry name" value="Ufl1"/>
</dbReference>
<dbReference type="InterPro" id="IPR056761">
    <property type="entry name" value="Ufl1-like_C"/>
</dbReference>
<dbReference type="InterPro" id="IPR056580">
    <property type="entry name" value="Ufl1_dom"/>
</dbReference>
<dbReference type="InterPro" id="IPR056579">
    <property type="entry name" value="Ufl1_N"/>
</dbReference>
<dbReference type="PANTHER" id="PTHR31057">
    <property type="entry name" value="E3 UFM1-PROTEIN LIGASE 1"/>
    <property type="match status" value="1"/>
</dbReference>
<dbReference type="PANTHER" id="PTHR31057:SF0">
    <property type="entry name" value="E3 UFM1-PROTEIN LIGASE 1"/>
    <property type="match status" value="1"/>
</dbReference>
<dbReference type="Pfam" id="PF09743">
    <property type="entry name" value="E3_UFM1_ligase"/>
    <property type="match status" value="1"/>
</dbReference>
<dbReference type="Pfam" id="PF23659">
    <property type="entry name" value="UFL1"/>
    <property type="match status" value="1"/>
</dbReference>
<dbReference type="Pfam" id="PF25041">
    <property type="entry name" value="UFL1_C"/>
    <property type="match status" value="1"/>
</dbReference>
<organism>
    <name type="scientific">Arabidopsis thaliana</name>
    <name type="common">Mouse-ear cress</name>
    <dbReference type="NCBI Taxonomy" id="3702"/>
    <lineage>
        <taxon>Eukaryota</taxon>
        <taxon>Viridiplantae</taxon>
        <taxon>Streptophyta</taxon>
        <taxon>Embryophyta</taxon>
        <taxon>Tracheophyta</taxon>
        <taxon>Spermatophyta</taxon>
        <taxon>Magnoliopsida</taxon>
        <taxon>eudicotyledons</taxon>
        <taxon>Gunneridae</taxon>
        <taxon>Pentapetalae</taxon>
        <taxon>rosids</taxon>
        <taxon>malvids</taxon>
        <taxon>Brassicales</taxon>
        <taxon>Brassicaceae</taxon>
        <taxon>Camelineae</taxon>
        <taxon>Arabidopsis</taxon>
    </lineage>
</organism>
<keyword id="KW-0007">Acetylation</keyword>
<keyword id="KW-0025">Alternative splicing</keyword>
<keyword id="KW-1185">Reference proteome</keyword>
<keyword id="KW-0808">Transferase</keyword>
<keyword id="KW-0833">Ubl conjugation pathway</keyword>
<gene>
    <name type="ordered locus">At3g46220</name>
    <name type="ORF">F12M12.190</name>
</gene>
<accession>Q9LX73</accession>
<feature type="chain" id="PRO_0000391894" description="E3 UFM1-protein ligase 1 homolog">
    <location>
        <begin position="1"/>
        <end position="804"/>
    </location>
</feature>
<feature type="region of interest" description="Disordered" evidence="2">
    <location>
        <begin position="397"/>
        <end position="483"/>
    </location>
</feature>
<feature type="compositionally biased region" description="Low complexity" evidence="2">
    <location>
        <begin position="400"/>
        <end position="409"/>
    </location>
</feature>
<feature type="compositionally biased region" description="Basic and acidic residues" evidence="2">
    <location>
        <begin position="463"/>
        <end position="475"/>
    </location>
</feature>
<feature type="modified residue" description="N-acetylmethionine" evidence="4">
    <location>
        <position position="1"/>
    </location>
</feature>
<comment type="function">
    <text evidence="1">E3 UFM1-protein ligase that mediates ufmylation of target proteins.</text>
</comment>
<comment type="alternative products">
    <event type="alternative splicing"/>
    <isoform>
        <id>Q9LX73-1</id>
        <name>1</name>
        <sequence type="displayed"/>
    </isoform>
    <text>A number of isoforms are produced. According to EST sequences.</text>
</comment>
<comment type="similarity">
    <text evidence="3">Belongs to the UFL1 family.</text>
</comment>
<sequence length="804" mass="89073">MDDELLELQRQFEFAQQVKSSVRLSDRNVVELVQKLQELGVIDFDLLHTVTGKEYITQEQLRNEITREISKLGRVSVIDLADTIGVDLYHVEKQAQDVVLNDPGLMLVQGEIISQSYWDSIAEEINERLQECSQIAVAELAGQLQVGSELVQSVLEPRLGTLVKARLEGGQLYTPAYVERVTAMVRGASRGIFVPSNLSALWAPLQQLVQETNGASGVAVENSFFQSIFNRLLKEEEMLGSLRAGTHWTPSAFATAQKECVDSSFSQNSYISYESMQKLGISQAVQFLQSRYPDGTPLAAVFIHSSMIEMLDSATEDAIEQNSWIDSLSVLPSSFTSQDANKMLLLCPSVQSALKAEKALILGESYVLSSGFIKGIYDQIEKEADAFSIQASTATLIHPSSKSSESTESIPANTDKGSKKKKGKSASTKAATVETVPDDEEDARPKSKRNQKKGRDSSSSQKLDSKAGGKKESVKAQESNNIIPPDEWVMKKIVDSVPEFEDDGTENPDSILKHLADHMKPMLINSLKERRKKIFTENADRMRRLIDDLQKKLDESFLNMQLYEKALDLFEDDQSTAVVLHRHLLRTTAATIADTLLHGLDIHNKMKNGTEVEESKTQDLVLLDSSERTALAKNLNGSLSKKALALVEALEGKRVDTFMVTFRDLAEESGLVLKKLDKKLERTLLHSYRKDLISQVSTESDPIALLAKVVSLLFIKIHNKALQAPGRAIAAAISHLKEKLDESAYKTLTDYQTATVTLLALMSASSGEEHDCSADRILTKRELLESQMPLLRTLVLGDSQPQQS</sequence>